<organism>
    <name type="scientific">Afipia carboxidovorans (strain ATCC 49405 / DSM 1227 / KCTC 32145 / OM5)</name>
    <name type="common">Oligotropha carboxidovorans</name>
    <dbReference type="NCBI Taxonomy" id="504832"/>
    <lineage>
        <taxon>Bacteria</taxon>
        <taxon>Pseudomonadati</taxon>
        <taxon>Pseudomonadota</taxon>
        <taxon>Alphaproteobacteria</taxon>
        <taxon>Hyphomicrobiales</taxon>
        <taxon>Nitrobacteraceae</taxon>
        <taxon>Afipia</taxon>
    </lineage>
</organism>
<sequence>MAHVALYPGSFDPVTNGHVDVVRQACTLVDRLIVAIGVHPGKAPLFSVDERRAMIVEVFSPLAATTGCAIECVTFDNLTVAAAEKSGATILIRGLRDGTDLDYEMQIAGMNQTLVPSVQTIFIPASPTVRPITATLVRQIASMGGDVSAFVPKAVAARLKAKFSQ</sequence>
<name>COAD_AFIC5</name>
<reference key="1">
    <citation type="journal article" date="2008" name="J. Bacteriol.">
        <title>Genome sequence of the chemolithoautotrophic bacterium Oligotropha carboxidovorans OM5T.</title>
        <authorList>
            <person name="Paul D."/>
            <person name="Bridges S."/>
            <person name="Burgess S.C."/>
            <person name="Dandass Y."/>
            <person name="Lawrence M.L."/>
        </authorList>
    </citation>
    <scope>NUCLEOTIDE SEQUENCE [LARGE SCALE GENOMIC DNA]</scope>
    <source>
        <strain>ATCC 49405 / DSM 1227 / KCTC 32145 / OM5</strain>
    </source>
</reference>
<reference key="2">
    <citation type="journal article" date="2011" name="J. Bacteriol.">
        <title>Complete genome sequences of the chemolithoautotrophic Oligotropha carboxidovorans strains OM4 and OM5.</title>
        <authorList>
            <person name="Volland S."/>
            <person name="Rachinger M."/>
            <person name="Strittmatter A."/>
            <person name="Daniel R."/>
            <person name="Gottschalk G."/>
            <person name="Meyer O."/>
        </authorList>
    </citation>
    <scope>NUCLEOTIDE SEQUENCE [LARGE SCALE GENOMIC DNA]</scope>
    <source>
        <strain>ATCC 49405 / DSM 1227 / KCTC 32145 / OM5</strain>
    </source>
</reference>
<dbReference type="EC" id="2.7.7.3" evidence="1"/>
<dbReference type="EMBL" id="CP001196">
    <property type="protein sequence ID" value="ACI93344.1"/>
    <property type="molecule type" value="Genomic_DNA"/>
</dbReference>
<dbReference type="EMBL" id="CP002826">
    <property type="protein sequence ID" value="AEI06513.1"/>
    <property type="molecule type" value="Genomic_DNA"/>
</dbReference>
<dbReference type="RefSeq" id="WP_012563370.1">
    <property type="nucleotide sequence ID" value="NC_015684.1"/>
</dbReference>
<dbReference type="SMR" id="B6JFC5"/>
<dbReference type="STRING" id="504832.OCA5_c17990"/>
<dbReference type="KEGG" id="oca:OCAR_6231"/>
<dbReference type="KEGG" id="ocg:OCA5_c17990"/>
<dbReference type="PATRIC" id="fig|504832.7.peg.1924"/>
<dbReference type="eggNOG" id="COG0669">
    <property type="taxonomic scope" value="Bacteria"/>
</dbReference>
<dbReference type="HOGENOM" id="CLU_100149_0_1_5"/>
<dbReference type="OrthoDB" id="9806661at2"/>
<dbReference type="UniPathway" id="UPA00241">
    <property type="reaction ID" value="UER00355"/>
</dbReference>
<dbReference type="Proteomes" id="UP000007730">
    <property type="component" value="Chromosome"/>
</dbReference>
<dbReference type="GO" id="GO:0005737">
    <property type="term" value="C:cytoplasm"/>
    <property type="evidence" value="ECO:0007669"/>
    <property type="project" value="UniProtKB-SubCell"/>
</dbReference>
<dbReference type="GO" id="GO:0005524">
    <property type="term" value="F:ATP binding"/>
    <property type="evidence" value="ECO:0007669"/>
    <property type="project" value="UniProtKB-KW"/>
</dbReference>
<dbReference type="GO" id="GO:0004595">
    <property type="term" value="F:pantetheine-phosphate adenylyltransferase activity"/>
    <property type="evidence" value="ECO:0007669"/>
    <property type="project" value="UniProtKB-UniRule"/>
</dbReference>
<dbReference type="GO" id="GO:0015937">
    <property type="term" value="P:coenzyme A biosynthetic process"/>
    <property type="evidence" value="ECO:0007669"/>
    <property type="project" value="UniProtKB-UniRule"/>
</dbReference>
<dbReference type="CDD" id="cd02163">
    <property type="entry name" value="PPAT"/>
    <property type="match status" value="1"/>
</dbReference>
<dbReference type="Gene3D" id="3.40.50.620">
    <property type="entry name" value="HUPs"/>
    <property type="match status" value="1"/>
</dbReference>
<dbReference type="HAMAP" id="MF_00151">
    <property type="entry name" value="PPAT_bact"/>
    <property type="match status" value="1"/>
</dbReference>
<dbReference type="InterPro" id="IPR004821">
    <property type="entry name" value="Cyt_trans-like"/>
</dbReference>
<dbReference type="InterPro" id="IPR001980">
    <property type="entry name" value="PPAT"/>
</dbReference>
<dbReference type="InterPro" id="IPR014729">
    <property type="entry name" value="Rossmann-like_a/b/a_fold"/>
</dbReference>
<dbReference type="NCBIfam" id="TIGR01510">
    <property type="entry name" value="coaD_prev_kdtB"/>
    <property type="match status" value="1"/>
</dbReference>
<dbReference type="NCBIfam" id="TIGR00125">
    <property type="entry name" value="cyt_tran_rel"/>
    <property type="match status" value="1"/>
</dbReference>
<dbReference type="PANTHER" id="PTHR21342">
    <property type="entry name" value="PHOSPHOPANTETHEINE ADENYLYLTRANSFERASE"/>
    <property type="match status" value="1"/>
</dbReference>
<dbReference type="PANTHER" id="PTHR21342:SF1">
    <property type="entry name" value="PHOSPHOPANTETHEINE ADENYLYLTRANSFERASE"/>
    <property type="match status" value="1"/>
</dbReference>
<dbReference type="Pfam" id="PF01467">
    <property type="entry name" value="CTP_transf_like"/>
    <property type="match status" value="1"/>
</dbReference>
<dbReference type="PRINTS" id="PR01020">
    <property type="entry name" value="LPSBIOSNTHSS"/>
</dbReference>
<dbReference type="SUPFAM" id="SSF52374">
    <property type="entry name" value="Nucleotidylyl transferase"/>
    <property type="match status" value="1"/>
</dbReference>
<accession>B6JFC5</accession>
<accession>F8BT16</accession>
<comment type="function">
    <text evidence="1">Reversibly transfers an adenylyl group from ATP to 4'-phosphopantetheine, yielding dephospho-CoA (dPCoA) and pyrophosphate.</text>
</comment>
<comment type="catalytic activity">
    <reaction evidence="1">
        <text>(R)-4'-phosphopantetheine + ATP + H(+) = 3'-dephospho-CoA + diphosphate</text>
        <dbReference type="Rhea" id="RHEA:19801"/>
        <dbReference type="ChEBI" id="CHEBI:15378"/>
        <dbReference type="ChEBI" id="CHEBI:30616"/>
        <dbReference type="ChEBI" id="CHEBI:33019"/>
        <dbReference type="ChEBI" id="CHEBI:57328"/>
        <dbReference type="ChEBI" id="CHEBI:61723"/>
        <dbReference type="EC" id="2.7.7.3"/>
    </reaction>
</comment>
<comment type="cofactor">
    <cofactor evidence="1">
        <name>Mg(2+)</name>
        <dbReference type="ChEBI" id="CHEBI:18420"/>
    </cofactor>
</comment>
<comment type="pathway">
    <text evidence="1">Cofactor biosynthesis; coenzyme A biosynthesis; CoA from (R)-pantothenate: step 4/5.</text>
</comment>
<comment type="subunit">
    <text evidence="1">Homohexamer.</text>
</comment>
<comment type="subcellular location">
    <subcellularLocation>
        <location evidence="1">Cytoplasm</location>
    </subcellularLocation>
</comment>
<comment type="similarity">
    <text evidence="1">Belongs to the bacterial CoaD family.</text>
</comment>
<feature type="chain" id="PRO_1000096819" description="Phosphopantetheine adenylyltransferase">
    <location>
        <begin position="1"/>
        <end position="165"/>
    </location>
</feature>
<feature type="binding site" evidence="1">
    <location>
        <begin position="10"/>
        <end position="11"/>
    </location>
    <ligand>
        <name>ATP</name>
        <dbReference type="ChEBI" id="CHEBI:30616"/>
    </ligand>
</feature>
<feature type="binding site" evidence="1">
    <location>
        <position position="10"/>
    </location>
    <ligand>
        <name>substrate</name>
    </ligand>
</feature>
<feature type="binding site" evidence="1">
    <location>
        <position position="18"/>
    </location>
    <ligand>
        <name>ATP</name>
        <dbReference type="ChEBI" id="CHEBI:30616"/>
    </ligand>
</feature>
<feature type="binding site" evidence="1">
    <location>
        <position position="42"/>
    </location>
    <ligand>
        <name>substrate</name>
    </ligand>
</feature>
<feature type="binding site" evidence="1">
    <location>
        <position position="79"/>
    </location>
    <ligand>
        <name>substrate</name>
    </ligand>
</feature>
<feature type="binding site" evidence="1">
    <location>
        <position position="93"/>
    </location>
    <ligand>
        <name>substrate</name>
    </ligand>
</feature>
<feature type="binding site" evidence="1">
    <location>
        <begin position="94"/>
        <end position="96"/>
    </location>
    <ligand>
        <name>ATP</name>
        <dbReference type="ChEBI" id="CHEBI:30616"/>
    </ligand>
</feature>
<feature type="binding site" evidence="1">
    <location>
        <position position="104"/>
    </location>
    <ligand>
        <name>ATP</name>
        <dbReference type="ChEBI" id="CHEBI:30616"/>
    </ligand>
</feature>
<feature type="binding site" evidence="1">
    <location>
        <begin position="129"/>
        <end position="135"/>
    </location>
    <ligand>
        <name>ATP</name>
        <dbReference type="ChEBI" id="CHEBI:30616"/>
    </ligand>
</feature>
<feature type="site" description="Transition state stabilizer" evidence="1">
    <location>
        <position position="18"/>
    </location>
</feature>
<proteinExistence type="inferred from homology"/>
<gene>
    <name evidence="1" type="primary">coaD</name>
    <name type="ordered locus">OCAR_6231</name>
    <name type="ordered locus">OCA5_c17990</name>
</gene>
<keyword id="KW-0067">ATP-binding</keyword>
<keyword id="KW-0173">Coenzyme A biosynthesis</keyword>
<keyword id="KW-0963">Cytoplasm</keyword>
<keyword id="KW-0460">Magnesium</keyword>
<keyword id="KW-0547">Nucleotide-binding</keyword>
<keyword id="KW-0548">Nucleotidyltransferase</keyword>
<keyword id="KW-1185">Reference proteome</keyword>
<keyword id="KW-0808">Transferase</keyword>
<protein>
    <recommendedName>
        <fullName evidence="1">Phosphopantetheine adenylyltransferase</fullName>
        <ecNumber evidence="1">2.7.7.3</ecNumber>
    </recommendedName>
    <alternativeName>
        <fullName evidence="1">Dephospho-CoA pyrophosphorylase</fullName>
    </alternativeName>
    <alternativeName>
        <fullName evidence="1">Pantetheine-phosphate adenylyltransferase</fullName>
        <shortName evidence="1">PPAT</shortName>
    </alternativeName>
</protein>
<evidence type="ECO:0000255" key="1">
    <source>
        <dbReference type="HAMAP-Rule" id="MF_00151"/>
    </source>
</evidence>